<gene>
    <name type="primary">A7</name>
</gene>
<organism>
    <name type="scientific">Alcelaphine herpesvirus 1 (strain C500)</name>
    <name type="common">AlHV-1</name>
    <name type="synonym">Malignant catarrhal fever virus</name>
    <dbReference type="NCBI Taxonomy" id="654901"/>
    <lineage>
        <taxon>Viruses</taxon>
        <taxon>Duplodnaviria</taxon>
        <taxon>Heunggongvirae</taxon>
        <taxon>Peploviricota</taxon>
        <taxon>Herviviricetes</taxon>
        <taxon>Herpesvirales</taxon>
        <taxon>Orthoherpesviridae</taxon>
        <taxon>Gammaherpesvirinae</taxon>
        <taxon>Macavirus</taxon>
        <taxon>Macavirus alcelaphinegamma1</taxon>
    </lineage>
</organism>
<sequence length="243" mass="27679">MLAEMLWPAVNMLLPRKALLVDIFFILAATNLMIAAFALGCLAFYKQLVYITIGNLTFPHQSGDEVIRAMYIPPVNDSVDFNPGFRLSWLNTLSPLSDGPYDSWSQCEICPGRFVGQKACYYVPPKTYSFQNCFFACKNISKCFYLYTPQNITDPFFDHTLRDQDIWIGTFFKKLNAALSTIDNNFDYTAWDELSVYCAYLTRRSRSTVYFTDCTTSKLCLCGQEDFTPAPFYEALTPAPVHG</sequence>
<organismHost>
    <name type="scientific">Connochaetes taurinus</name>
    <name type="common">Blue wildebeest</name>
    <dbReference type="NCBI Taxonomy" id="9927"/>
</organismHost>
<reference key="1">
    <citation type="journal article" date="1997" name="J. Virol.">
        <title>Primary structure of the alcelaphine herpesvirus 1 genome.</title>
        <authorList>
            <person name="Ensser A."/>
            <person name="Pflanz R."/>
            <person name="Fleckenstein B."/>
        </authorList>
    </citation>
    <scope>NUCLEOTIDE SEQUENCE [LARGE SCALE GENOMIC DNA]</scope>
</reference>
<comment type="subcellular location">
    <subcellularLocation>
        <location evidence="3">Host membrane</location>
        <topology evidence="3">Single-pass membrane protein</topology>
    </subcellularLocation>
</comment>
<accession>O36400</accession>
<feature type="chain" id="PRO_0000405712" description="Putative C-type lectin protein A7">
    <location>
        <begin position="1"/>
        <end position="243"/>
    </location>
</feature>
<feature type="transmembrane region" description="Helical" evidence="2">
    <location>
        <begin position="23"/>
        <end position="43"/>
    </location>
</feature>
<feature type="domain" description="C-type lectin">
    <location>
        <begin position="116"/>
        <end position="223"/>
    </location>
</feature>
<feature type="disulfide bond" evidence="1">
    <location>
        <begin position="137"/>
        <end position="222"/>
    </location>
</feature>
<feature type="disulfide bond" evidence="1">
    <location>
        <begin position="198"/>
        <end position="214"/>
    </location>
</feature>
<evidence type="ECO:0000250" key="1"/>
<evidence type="ECO:0000255" key="2"/>
<evidence type="ECO:0000305" key="3"/>
<dbReference type="EMBL" id="AF005370">
    <property type="protein sequence ID" value="AAC58097.1"/>
    <property type="molecule type" value="Genomic_DNA"/>
</dbReference>
<dbReference type="PIR" id="T03145">
    <property type="entry name" value="T03145"/>
</dbReference>
<dbReference type="RefSeq" id="NP_065549.1">
    <property type="nucleotide sequence ID" value="NC_002531.1"/>
</dbReference>
<dbReference type="SMR" id="O36400"/>
<dbReference type="TCDB" id="1.G.21.1.3">
    <property type="family name" value="the epstein barr virus (human herpes virus 4) gp42 (gp42) family"/>
</dbReference>
<dbReference type="KEGG" id="vg:911767"/>
<dbReference type="Proteomes" id="UP000000941">
    <property type="component" value="Segment"/>
</dbReference>
<dbReference type="GO" id="GO:0033644">
    <property type="term" value="C:host cell membrane"/>
    <property type="evidence" value="ECO:0007669"/>
    <property type="project" value="UniProtKB-SubCell"/>
</dbReference>
<dbReference type="GO" id="GO:0016020">
    <property type="term" value="C:membrane"/>
    <property type="evidence" value="ECO:0007669"/>
    <property type="project" value="UniProtKB-KW"/>
</dbReference>
<dbReference type="Gene3D" id="3.10.100.10">
    <property type="entry name" value="Mannose-Binding Protein A, subunit A"/>
    <property type="match status" value="1"/>
</dbReference>
<dbReference type="InterPro" id="IPR001304">
    <property type="entry name" value="C-type_lectin-like"/>
</dbReference>
<dbReference type="InterPro" id="IPR016186">
    <property type="entry name" value="C-type_lectin-like/link_sf"/>
</dbReference>
<dbReference type="InterPro" id="IPR016187">
    <property type="entry name" value="CTDL_fold"/>
</dbReference>
<dbReference type="Pfam" id="PF00059">
    <property type="entry name" value="Lectin_C"/>
    <property type="match status" value="1"/>
</dbReference>
<dbReference type="SUPFAM" id="SSF56436">
    <property type="entry name" value="C-type lectin-like"/>
    <property type="match status" value="1"/>
</dbReference>
<keyword id="KW-1015">Disulfide bond</keyword>
<keyword id="KW-1043">Host membrane</keyword>
<keyword id="KW-0472">Membrane</keyword>
<keyword id="KW-1185">Reference proteome</keyword>
<keyword id="KW-0812">Transmembrane</keyword>
<keyword id="KW-1133">Transmembrane helix</keyword>
<protein>
    <recommendedName>
        <fullName>Putative C-type lectin protein A7</fullName>
    </recommendedName>
</protein>
<name>VGA7_ALHV1</name>
<proteinExistence type="predicted"/>